<proteinExistence type="inferred from homology"/>
<comment type="function">
    <text evidence="1">Zinc phosphodiesterase, which displays some tRNA 3'-processing endonuclease activity. Probably involved in tRNA maturation, by removing a 3'-trailer from precursor tRNA.</text>
</comment>
<comment type="catalytic activity">
    <reaction evidence="1">
        <text>Endonucleolytic cleavage of RNA, removing extra 3' nucleotides from tRNA precursor, generating 3' termini of tRNAs. A 3'-hydroxy group is left at the tRNA terminus and a 5'-phosphoryl group is left at the trailer molecule.</text>
        <dbReference type="EC" id="3.1.26.11"/>
    </reaction>
</comment>
<comment type="cofactor">
    <cofactor evidence="1">
        <name>Zn(2+)</name>
        <dbReference type="ChEBI" id="CHEBI:29105"/>
    </cofactor>
    <text evidence="1">Binds 2 Zn(2+) ions.</text>
</comment>
<comment type="subunit">
    <text evidence="1">Homodimer.</text>
</comment>
<comment type="similarity">
    <text evidence="1">Belongs to the RNase Z family.</text>
</comment>
<sequence length="320" mass="35642">MQITFLGTSSGVPTRSRNVSSVALRLPQRAEVWLFDCGEATQHQILRSDVRLSQIRRIFITHMHGDHIFGLMGLLASCGLAGNVSRMDIYGPPGLNKYLEACQRYSQTHFSYPIRVHTVQPGVIYEDEEFTVSCTALHHRVTAFGYRVSEKDRPGRFDVQQAVALGIPSGPLYGQLKRGEQVTLADGRVIHGQQLCAPPELGRKLAYCTDTIYCEGAVELAQDVDVLIHEATFAHQDADMAYQRLHSTSTMAAQVALAAAAKRLFLTHFSPRYAPGNDLQIDNLLEEARAIFAPTELAYDFLTYELPRHLEPERQTLSVG</sequence>
<dbReference type="EC" id="3.1.26.11" evidence="1"/>
<dbReference type="EMBL" id="CP001344">
    <property type="protein sequence ID" value="ACL47341.1"/>
    <property type="molecule type" value="Genomic_DNA"/>
</dbReference>
<dbReference type="SMR" id="B8HP81"/>
<dbReference type="STRING" id="395961.Cyan7425_5044"/>
<dbReference type="KEGG" id="cyn:Cyan7425_5044"/>
<dbReference type="eggNOG" id="COG1234">
    <property type="taxonomic scope" value="Bacteria"/>
</dbReference>
<dbReference type="HOGENOM" id="CLU_031317_2_0_3"/>
<dbReference type="OrthoDB" id="9800940at2"/>
<dbReference type="GO" id="GO:0042781">
    <property type="term" value="F:3'-tRNA processing endoribonuclease activity"/>
    <property type="evidence" value="ECO:0007669"/>
    <property type="project" value="UniProtKB-UniRule"/>
</dbReference>
<dbReference type="GO" id="GO:0008270">
    <property type="term" value="F:zinc ion binding"/>
    <property type="evidence" value="ECO:0007669"/>
    <property type="project" value="UniProtKB-UniRule"/>
</dbReference>
<dbReference type="CDD" id="cd07717">
    <property type="entry name" value="RNaseZ_ZiPD-like_MBL-fold"/>
    <property type="match status" value="1"/>
</dbReference>
<dbReference type="FunFam" id="3.60.15.10:FF:000002">
    <property type="entry name" value="Ribonuclease Z"/>
    <property type="match status" value="1"/>
</dbReference>
<dbReference type="Gene3D" id="3.60.15.10">
    <property type="entry name" value="Ribonuclease Z/Hydroxyacylglutathione hydrolase-like"/>
    <property type="match status" value="1"/>
</dbReference>
<dbReference type="HAMAP" id="MF_01818">
    <property type="entry name" value="RNase_Z_BN"/>
    <property type="match status" value="1"/>
</dbReference>
<dbReference type="InterPro" id="IPR001279">
    <property type="entry name" value="Metallo-B-lactamas"/>
</dbReference>
<dbReference type="InterPro" id="IPR036866">
    <property type="entry name" value="RibonucZ/Hydroxyglut_hydro"/>
</dbReference>
<dbReference type="InterPro" id="IPR013471">
    <property type="entry name" value="RNase_Z/BN"/>
</dbReference>
<dbReference type="NCBIfam" id="NF000801">
    <property type="entry name" value="PRK00055.1-3"/>
    <property type="match status" value="1"/>
</dbReference>
<dbReference type="NCBIfam" id="TIGR02651">
    <property type="entry name" value="RNase_Z"/>
    <property type="match status" value="1"/>
</dbReference>
<dbReference type="PANTHER" id="PTHR46018">
    <property type="entry name" value="ZINC PHOSPHODIESTERASE ELAC PROTEIN 1"/>
    <property type="match status" value="1"/>
</dbReference>
<dbReference type="PANTHER" id="PTHR46018:SF2">
    <property type="entry name" value="ZINC PHOSPHODIESTERASE ELAC PROTEIN 1"/>
    <property type="match status" value="1"/>
</dbReference>
<dbReference type="Pfam" id="PF12706">
    <property type="entry name" value="Lactamase_B_2"/>
    <property type="match status" value="2"/>
</dbReference>
<dbReference type="SUPFAM" id="SSF56281">
    <property type="entry name" value="Metallo-hydrolase/oxidoreductase"/>
    <property type="match status" value="1"/>
</dbReference>
<protein>
    <recommendedName>
        <fullName evidence="1">Ribonuclease Z</fullName>
        <shortName evidence="1">RNase Z</shortName>
        <ecNumber evidence="1">3.1.26.11</ecNumber>
    </recommendedName>
    <alternativeName>
        <fullName evidence="1">tRNA 3 endonuclease</fullName>
    </alternativeName>
    <alternativeName>
        <fullName evidence="1">tRNase Z</fullName>
    </alternativeName>
</protein>
<keyword id="KW-0255">Endonuclease</keyword>
<keyword id="KW-0378">Hydrolase</keyword>
<keyword id="KW-0479">Metal-binding</keyword>
<keyword id="KW-0540">Nuclease</keyword>
<keyword id="KW-0819">tRNA processing</keyword>
<keyword id="KW-0862">Zinc</keyword>
<gene>
    <name evidence="1" type="primary">rnz</name>
    <name type="ordered locus">Cyan7425_5044</name>
</gene>
<evidence type="ECO:0000255" key="1">
    <source>
        <dbReference type="HAMAP-Rule" id="MF_01818"/>
    </source>
</evidence>
<reference key="1">
    <citation type="journal article" date="2011" name="MBio">
        <title>Novel metabolic attributes of the genus Cyanothece, comprising a group of unicellular nitrogen-fixing Cyanobacteria.</title>
        <authorList>
            <person name="Bandyopadhyay A."/>
            <person name="Elvitigala T."/>
            <person name="Welsh E."/>
            <person name="Stockel J."/>
            <person name="Liberton M."/>
            <person name="Min H."/>
            <person name="Sherman L.A."/>
            <person name="Pakrasi H.B."/>
        </authorList>
    </citation>
    <scope>NUCLEOTIDE SEQUENCE [LARGE SCALE GENOMIC DNA]</scope>
    <source>
        <strain>PCC 7425 / ATCC 29141</strain>
    </source>
</reference>
<organism>
    <name type="scientific">Cyanothece sp. (strain PCC 7425 / ATCC 29141)</name>
    <dbReference type="NCBI Taxonomy" id="395961"/>
    <lineage>
        <taxon>Bacteria</taxon>
        <taxon>Bacillati</taxon>
        <taxon>Cyanobacteriota</taxon>
        <taxon>Cyanophyceae</taxon>
        <taxon>Gomontiellales</taxon>
        <taxon>Cyanothecaceae</taxon>
        <taxon>Cyanothece</taxon>
    </lineage>
</organism>
<name>RNZ_CYAP4</name>
<accession>B8HP81</accession>
<feature type="chain" id="PRO_1000187949" description="Ribonuclease Z">
    <location>
        <begin position="1"/>
        <end position="320"/>
    </location>
</feature>
<feature type="active site" description="Proton acceptor" evidence="1">
    <location>
        <position position="66"/>
    </location>
</feature>
<feature type="binding site" evidence="1">
    <location>
        <position position="62"/>
    </location>
    <ligand>
        <name>Zn(2+)</name>
        <dbReference type="ChEBI" id="CHEBI:29105"/>
        <label>1</label>
        <note>catalytic</note>
    </ligand>
</feature>
<feature type="binding site" evidence="1">
    <location>
        <position position="64"/>
    </location>
    <ligand>
        <name>Zn(2+)</name>
        <dbReference type="ChEBI" id="CHEBI:29105"/>
        <label>1</label>
        <note>catalytic</note>
    </ligand>
</feature>
<feature type="binding site" evidence="1">
    <location>
        <position position="66"/>
    </location>
    <ligand>
        <name>Zn(2+)</name>
        <dbReference type="ChEBI" id="CHEBI:29105"/>
        <label>2</label>
        <note>catalytic</note>
    </ligand>
</feature>
<feature type="binding site" evidence="1">
    <location>
        <position position="67"/>
    </location>
    <ligand>
        <name>Zn(2+)</name>
        <dbReference type="ChEBI" id="CHEBI:29105"/>
        <label>2</label>
        <note>catalytic</note>
    </ligand>
</feature>
<feature type="binding site" evidence="1">
    <location>
        <position position="139"/>
    </location>
    <ligand>
        <name>Zn(2+)</name>
        <dbReference type="ChEBI" id="CHEBI:29105"/>
        <label>1</label>
        <note>catalytic</note>
    </ligand>
</feature>
<feature type="binding site" evidence="1">
    <location>
        <position position="210"/>
    </location>
    <ligand>
        <name>Zn(2+)</name>
        <dbReference type="ChEBI" id="CHEBI:29105"/>
        <label>1</label>
        <note>catalytic</note>
    </ligand>
</feature>
<feature type="binding site" evidence="1">
    <location>
        <position position="210"/>
    </location>
    <ligand>
        <name>Zn(2+)</name>
        <dbReference type="ChEBI" id="CHEBI:29105"/>
        <label>2</label>
        <note>catalytic</note>
    </ligand>
</feature>
<feature type="binding site" evidence="1">
    <location>
        <position position="268"/>
    </location>
    <ligand>
        <name>Zn(2+)</name>
        <dbReference type="ChEBI" id="CHEBI:29105"/>
        <label>2</label>
        <note>catalytic</note>
    </ligand>
</feature>